<organism evidence="6">
    <name type="scientific">Arabidopsis thaliana</name>
    <name type="common">Mouse-ear cress</name>
    <dbReference type="NCBI Taxonomy" id="3702"/>
    <lineage>
        <taxon>Eukaryota</taxon>
        <taxon>Viridiplantae</taxon>
        <taxon>Streptophyta</taxon>
        <taxon>Embryophyta</taxon>
        <taxon>Tracheophyta</taxon>
        <taxon>Spermatophyta</taxon>
        <taxon>Magnoliopsida</taxon>
        <taxon>eudicotyledons</taxon>
        <taxon>Gunneridae</taxon>
        <taxon>Pentapetalae</taxon>
        <taxon>rosids</taxon>
        <taxon>malvids</taxon>
        <taxon>Brassicales</taxon>
        <taxon>Brassicaceae</taxon>
        <taxon>Camelineae</taxon>
        <taxon>Arabidopsis</taxon>
    </lineage>
</organism>
<protein>
    <recommendedName>
        <fullName evidence="4">Large ribosomal RNA subunit accumulation protein YCED homolog 2, chloroplastic</fullName>
    </recommendedName>
    <alternativeName>
        <fullName evidence="3">Protein DUF177B</fullName>
    </alternativeName>
</protein>
<keyword id="KW-0025">Alternative splicing</keyword>
<keyword id="KW-0150">Chloroplast</keyword>
<keyword id="KW-0934">Plastid</keyword>
<keyword id="KW-1185">Reference proteome</keyword>
<keyword id="KW-0690">Ribosome biogenesis</keyword>
<keyword id="KW-0809">Transit peptide</keyword>
<reference key="1">
    <citation type="journal article" date="2000" name="DNA Res.">
        <title>Structural analysis of Arabidopsis thaliana chromosome 3. I. Sequence features of the regions of 4,504,864 bp covered by sixty P1 and TAC clones.</title>
        <authorList>
            <person name="Sato S."/>
            <person name="Nakamura Y."/>
            <person name="Kaneko T."/>
            <person name="Katoh T."/>
            <person name="Asamizu E."/>
            <person name="Tabata S."/>
        </authorList>
    </citation>
    <scope>NUCLEOTIDE SEQUENCE [LARGE SCALE GENOMIC DNA]</scope>
    <source>
        <strain>cv. Columbia</strain>
    </source>
</reference>
<reference key="2">
    <citation type="journal article" date="2017" name="Plant J.">
        <title>Araport11: a complete reannotation of the Arabidopsis thaliana reference genome.</title>
        <authorList>
            <person name="Cheng C.Y."/>
            <person name="Krishnakumar V."/>
            <person name="Chan A.P."/>
            <person name="Thibaud-Nissen F."/>
            <person name="Schobel S."/>
            <person name="Town C.D."/>
        </authorList>
    </citation>
    <scope>GENOME REANNOTATION</scope>
    <source>
        <strain>cv. Columbia</strain>
    </source>
</reference>
<reference key="3">
    <citation type="journal article" date="2003" name="Science">
        <title>Empirical analysis of transcriptional activity in the Arabidopsis genome.</title>
        <authorList>
            <person name="Yamada K."/>
            <person name="Lim J."/>
            <person name="Dale J.M."/>
            <person name="Chen H."/>
            <person name="Shinn P."/>
            <person name="Palm C.J."/>
            <person name="Southwick A.M."/>
            <person name="Wu H.C."/>
            <person name="Kim C.J."/>
            <person name="Nguyen M."/>
            <person name="Pham P.K."/>
            <person name="Cheuk R.F."/>
            <person name="Karlin-Newmann G."/>
            <person name="Liu S.X."/>
            <person name="Lam B."/>
            <person name="Sakano H."/>
            <person name="Wu T."/>
            <person name="Yu G."/>
            <person name="Miranda M."/>
            <person name="Quach H.L."/>
            <person name="Tripp M."/>
            <person name="Chang C.H."/>
            <person name="Lee J.M."/>
            <person name="Toriumi M.J."/>
            <person name="Chan M.M."/>
            <person name="Tang C.C."/>
            <person name="Onodera C.S."/>
            <person name="Deng J.M."/>
            <person name="Akiyama K."/>
            <person name="Ansari Y."/>
            <person name="Arakawa T."/>
            <person name="Banh J."/>
            <person name="Banno F."/>
            <person name="Bowser L."/>
            <person name="Brooks S.Y."/>
            <person name="Carninci P."/>
            <person name="Chao Q."/>
            <person name="Choy N."/>
            <person name="Enju A."/>
            <person name="Goldsmith A.D."/>
            <person name="Gurjal M."/>
            <person name="Hansen N.F."/>
            <person name="Hayashizaki Y."/>
            <person name="Johnson-Hopson C."/>
            <person name="Hsuan V.W."/>
            <person name="Iida K."/>
            <person name="Karnes M."/>
            <person name="Khan S."/>
            <person name="Koesema E."/>
            <person name="Ishida J."/>
            <person name="Jiang P.X."/>
            <person name="Jones T."/>
            <person name="Kawai J."/>
            <person name="Kamiya A."/>
            <person name="Meyers C."/>
            <person name="Nakajima M."/>
            <person name="Narusaka M."/>
            <person name="Seki M."/>
            <person name="Sakurai T."/>
            <person name="Satou M."/>
            <person name="Tamse R."/>
            <person name="Vaysberg M."/>
            <person name="Wallender E.K."/>
            <person name="Wong C."/>
            <person name="Yamamura Y."/>
            <person name="Yuan S."/>
            <person name="Shinozaki K."/>
            <person name="Davis R.W."/>
            <person name="Theologis A."/>
            <person name="Ecker J.R."/>
        </authorList>
    </citation>
    <scope>NUCLEOTIDE SEQUENCE [LARGE SCALE MRNA]</scope>
    <source>
        <strain>cv. Columbia</strain>
    </source>
</reference>
<reference key="4">
    <citation type="submission" date="2002-03" db="EMBL/GenBank/DDBJ databases">
        <title>Full-length cDNA from Arabidopsis thaliana.</title>
        <authorList>
            <person name="Brover V.V."/>
            <person name="Troukhan M.E."/>
            <person name="Alexandrov N.A."/>
            <person name="Lu Y.-P."/>
            <person name="Flavell R.B."/>
            <person name="Feldmann K.A."/>
        </authorList>
    </citation>
    <scope>NUCLEOTIDE SEQUENCE [LARGE SCALE MRNA]</scope>
</reference>
<reference key="5">
    <citation type="journal article" date="2016" name="J. Exp. Bot.">
        <title>Essential role of conserved DUF177A protein in plastid 23S rRNA accumulation and plant embryogenesis.</title>
        <authorList>
            <person name="Yang J."/>
            <person name="Suzuki M."/>
            <person name="McCarty D.R."/>
        </authorList>
    </citation>
    <scope>FUNCTION</scope>
</reference>
<accession>Q9C5M1</accession>
<accession>B3H4W6</accession>
<accession>Q9LT28</accession>
<evidence type="ECO:0000250" key="1">
    <source>
        <dbReference type="UniProtKB" id="Q9LT27"/>
    </source>
</evidence>
<evidence type="ECO:0000255" key="2"/>
<evidence type="ECO:0000303" key="3">
    <source>
    </source>
</evidence>
<evidence type="ECO:0000305" key="4"/>
<evidence type="ECO:0000312" key="5">
    <source>
        <dbReference type="Araport" id="AT3G19800"/>
    </source>
</evidence>
<evidence type="ECO:0000312" key="6">
    <source>
        <dbReference type="EMBL" id="AAK25860.1"/>
    </source>
</evidence>
<evidence type="ECO:0000312" key="7">
    <source>
        <dbReference type="EMBL" id="BAB01294.1"/>
    </source>
</evidence>
<comment type="function">
    <text evidence="1">May play a role in synthesis, processing and/or stability of 23S rRNA.</text>
</comment>
<comment type="subcellular location">
    <subcellularLocation>
        <location evidence="2">Plastid</location>
        <location evidence="2">Chloroplast</location>
    </subcellularLocation>
</comment>
<comment type="alternative products">
    <event type="alternative splicing"/>
    <isoform>
        <id>Q9C5M1-1</id>
        <name>1</name>
        <sequence type="displayed"/>
    </isoform>
    <isoform>
        <id>Q9C5M1-2</id>
        <name>2</name>
        <sequence type="described" ref="VSP_058783"/>
    </isoform>
</comment>
<comment type="similarity">
    <text evidence="4">Belongs to the DUF177 domain family.</text>
</comment>
<comment type="sequence caution" evidence="4">
    <conflict type="erroneous gene model prediction">
        <sequence resource="EMBL-CDS" id="BAB01294"/>
    </conflict>
</comment>
<dbReference type="EMBL" id="AB025631">
    <property type="protein sequence ID" value="BAB01294.1"/>
    <property type="status" value="ALT_SEQ"/>
    <property type="molecule type" value="Genomic_DNA"/>
</dbReference>
<dbReference type="EMBL" id="CP002686">
    <property type="protein sequence ID" value="AEE76290.1"/>
    <property type="molecule type" value="Genomic_DNA"/>
</dbReference>
<dbReference type="EMBL" id="CP002686">
    <property type="protein sequence ID" value="AEE76291.1"/>
    <property type="molecule type" value="Genomic_DNA"/>
</dbReference>
<dbReference type="EMBL" id="AF360150">
    <property type="protein sequence ID" value="AAK25860.1"/>
    <property type="molecule type" value="mRNA"/>
</dbReference>
<dbReference type="EMBL" id="AY056306">
    <property type="protein sequence ID" value="AAL07155.1"/>
    <property type="molecule type" value="mRNA"/>
</dbReference>
<dbReference type="EMBL" id="AY088088">
    <property type="protein sequence ID" value="AAM65634.1"/>
    <property type="molecule type" value="mRNA"/>
</dbReference>
<dbReference type="RefSeq" id="NP_001118666.1">
    <molecule id="Q9C5M1-2"/>
    <property type="nucleotide sequence ID" value="NM_001125194.1"/>
</dbReference>
<dbReference type="RefSeq" id="NP_566648.1">
    <molecule id="Q9C5M1-1"/>
    <property type="nucleotide sequence ID" value="NM_112870.5"/>
</dbReference>
<dbReference type="FunCoup" id="Q9C5M1">
    <property type="interactions" value="1444"/>
</dbReference>
<dbReference type="STRING" id="3702.Q9C5M1"/>
<dbReference type="PaxDb" id="3702-AT3G19800.1"/>
<dbReference type="ProteomicsDB" id="243248">
    <molecule id="Q9C5M1-1"/>
</dbReference>
<dbReference type="EnsemblPlants" id="AT3G19800.1">
    <molecule id="Q9C5M1-1"/>
    <property type="protein sequence ID" value="AT3G19800.1"/>
    <property type="gene ID" value="AT3G19800"/>
</dbReference>
<dbReference type="EnsemblPlants" id="AT3G19800.2">
    <molecule id="Q9C5M1-2"/>
    <property type="protein sequence ID" value="AT3G19800.2"/>
    <property type="gene ID" value="AT3G19800"/>
</dbReference>
<dbReference type="GeneID" id="821517"/>
<dbReference type="Gramene" id="AT3G19800.1">
    <molecule id="Q9C5M1-1"/>
    <property type="protein sequence ID" value="AT3G19800.1"/>
    <property type="gene ID" value="AT3G19800"/>
</dbReference>
<dbReference type="Gramene" id="AT3G19800.2">
    <molecule id="Q9C5M1-2"/>
    <property type="protein sequence ID" value="AT3G19800.2"/>
    <property type="gene ID" value="AT3G19800"/>
</dbReference>
<dbReference type="KEGG" id="ath:AT3G19800"/>
<dbReference type="Araport" id="AT3G19800"/>
<dbReference type="TAIR" id="AT3G19800">
    <property type="gene designation" value="DUF177B"/>
</dbReference>
<dbReference type="eggNOG" id="ENOG502QPK5">
    <property type="taxonomic scope" value="Eukaryota"/>
</dbReference>
<dbReference type="InParanoid" id="Q9C5M1"/>
<dbReference type="OMA" id="TPYCRQI"/>
<dbReference type="OrthoDB" id="1912778at2759"/>
<dbReference type="PhylomeDB" id="Q9C5M1"/>
<dbReference type="PRO" id="PR:Q9C5M1"/>
<dbReference type="Proteomes" id="UP000006548">
    <property type="component" value="Chromosome 3"/>
</dbReference>
<dbReference type="ExpressionAtlas" id="Q9C5M1">
    <property type="expression patterns" value="baseline and differential"/>
</dbReference>
<dbReference type="GO" id="GO:0009507">
    <property type="term" value="C:chloroplast"/>
    <property type="evidence" value="ECO:0007669"/>
    <property type="project" value="UniProtKB-SubCell"/>
</dbReference>
<dbReference type="GO" id="GO:0042254">
    <property type="term" value="P:ribosome biogenesis"/>
    <property type="evidence" value="ECO:0007669"/>
    <property type="project" value="UniProtKB-KW"/>
</dbReference>
<dbReference type="InterPro" id="IPR003772">
    <property type="entry name" value="YceD"/>
</dbReference>
<dbReference type="InterPro" id="IPR044985">
    <property type="entry name" value="YceD_plant"/>
</dbReference>
<dbReference type="PANTHER" id="PTHR37734">
    <property type="entry name" value="LARGE RIBOSOMAL RNA SUBUNIT ACCUMULATION PROTEIN YCED HOMOLOG 2, CHLOROPLASTIC"/>
    <property type="match status" value="1"/>
</dbReference>
<dbReference type="PANTHER" id="PTHR37734:SF1">
    <property type="entry name" value="LARGE RIBOSOMAL RNA SUBUNIT ACCUMULATION PROTEIN YCED HOMOLOG 2, CHLOROPLASTIC"/>
    <property type="match status" value="1"/>
</dbReference>
<dbReference type="Pfam" id="PF02620">
    <property type="entry name" value="YceD"/>
    <property type="match status" value="1"/>
</dbReference>
<proteinExistence type="evidence at transcript level"/>
<feature type="transit peptide" description="Chloroplast" evidence="4">
    <location>
        <begin position="1"/>
        <end position="42"/>
    </location>
</feature>
<feature type="chain" id="PRO_0000439066" description="Large ribosomal RNA subunit accumulation protein YCED homolog 2, chloroplastic">
    <location>
        <begin position="43"/>
        <end position="229"/>
    </location>
</feature>
<feature type="splice variant" id="VSP_058783" description="In isoform 2.">
    <location>
        <begin position="39"/>
        <end position="41"/>
    </location>
</feature>
<sequence length="229" mass="25289">MDVRCLISPNLLNSKIKVSGNTHHLPFSSLSKKHQASSPIQAAINGGGSSKTVKRLITLSPSEGKWNGNWKTQYDVSLRDLQLQDLVEDGPPNSRVSVDLSVQRHASMGLSVDGRIMTSIARKCSICSSLYPRLIDTSFTVWILPSSRENRASTLPEIGGDDPSVIYVRPGYEANLDSLVQDTIRLTTYAKDICSDSCEKSEPTLHYVGQTNTASVDKRWSRLLELKKK</sequence>
<name>YCED2_ARATH</name>
<gene>
    <name evidence="5" type="ordered locus">At3g19800</name>
    <name evidence="7" type="ORF">MPN9.4</name>
</gene>